<dbReference type="EMBL" id="AC245470">
    <property type="status" value="NOT_ANNOTATED_CDS"/>
    <property type="molecule type" value="Genomic_DNA"/>
</dbReference>
<dbReference type="SMR" id="A0A0B4J280"/>
<dbReference type="FunCoup" id="A0A0B4J280">
    <property type="interactions" value="307"/>
</dbReference>
<dbReference type="IMGT_GENE-DB" id="TRAV40"/>
<dbReference type="GlyCosmos" id="A0A0B4J280">
    <property type="glycosylation" value="1 site, No reported glycans"/>
</dbReference>
<dbReference type="GlyGen" id="A0A0B4J280">
    <property type="glycosylation" value="1 site"/>
</dbReference>
<dbReference type="BioMuta" id="TRAV40"/>
<dbReference type="Ensembl" id="ENST00000390467.3">
    <property type="protein sequence ID" value="ENSP00000452585.1"/>
    <property type="gene ID" value="ENSG00000211819.3"/>
</dbReference>
<dbReference type="AGR" id="HGNC:12141"/>
<dbReference type="GeneCards" id="TRAV40"/>
<dbReference type="HGNC" id="HGNC:12141">
    <property type="gene designation" value="TRAV40"/>
</dbReference>
<dbReference type="HPA" id="ENSG00000211819">
    <property type="expression patterns" value="Tissue enriched (lymphoid)"/>
</dbReference>
<dbReference type="neXtProt" id="NX_A0A0B4J280"/>
<dbReference type="VEuPathDB" id="HostDB:ENSG00000211819"/>
<dbReference type="GeneTree" id="ENSGT00920000149497"/>
<dbReference type="HOGENOM" id="CLU_077975_8_0_1"/>
<dbReference type="InParanoid" id="A0A0B4J280"/>
<dbReference type="OMA" id="KGPEEVC"/>
<dbReference type="OrthoDB" id="8947657at2759"/>
<dbReference type="PAN-GO" id="A0A0B4J280">
    <property type="GO annotations" value="3 GO annotations based on evolutionary models"/>
</dbReference>
<dbReference type="PhylomeDB" id="A0A0B4J280"/>
<dbReference type="Pharos" id="A0A0B4J280">
    <property type="development level" value="Tdark"/>
</dbReference>
<dbReference type="PRO" id="PR:A0A0B4J280"/>
<dbReference type="Proteomes" id="UP000005640">
    <property type="component" value="Chromosome 14"/>
</dbReference>
<dbReference type="RNAct" id="A0A0B4J280">
    <property type="molecule type" value="protein"/>
</dbReference>
<dbReference type="Bgee" id="ENSG00000211819">
    <property type="expression patterns" value="Expressed in tibialis anterior and 63 other cell types or tissues"/>
</dbReference>
<dbReference type="GO" id="GO:0042101">
    <property type="term" value="C:T cell receptor complex"/>
    <property type="evidence" value="ECO:0007669"/>
    <property type="project" value="UniProtKB-KW"/>
</dbReference>
<dbReference type="GO" id="GO:0002250">
    <property type="term" value="P:adaptive immune response"/>
    <property type="evidence" value="ECO:0007669"/>
    <property type="project" value="UniProtKB-KW"/>
</dbReference>
<dbReference type="FunFam" id="2.60.40.10:FF:003562">
    <property type="match status" value="1"/>
</dbReference>
<dbReference type="Gene3D" id="2.60.40.10">
    <property type="entry name" value="Immunoglobulins"/>
    <property type="match status" value="1"/>
</dbReference>
<dbReference type="InterPro" id="IPR007110">
    <property type="entry name" value="Ig-like_dom"/>
</dbReference>
<dbReference type="InterPro" id="IPR036179">
    <property type="entry name" value="Ig-like_dom_sf"/>
</dbReference>
<dbReference type="InterPro" id="IPR013783">
    <property type="entry name" value="Ig-like_fold"/>
</dbReference>
<dbReference type="InterPro" id="IPR013106">
    <property type="entry name" value="Ig_V-set"/>
</dbReference>
<dbReference type="InterPro" id="IPR051287">
    <property type="entry name" value="TCR_variable_region"/>
</dbReference>
<dbReference type="PANTHER" id="PTHR19367:SF35">
    <property type="entry name" value="T CELL RECEPTOR ALPHA VARIABLE 40"/>
    <property type="match status" value="1"/>
</dbReference>
<dbReference type="PANTHER" id="PTHR19367">
    <property type="entry name" value="T-CELL RECEPTOR ALPHA CHAIN V REGION"/>
    <property type="match status" value="1"/>
</dbReference>
<dbReference type="Pfam" id="PF07686">
    <property type="entry name" value="V-set"/>
    <property type="match status" value="1"/>
</dbReference>
<dbReference type="SUPFAM" id="SSF48726">
    <property type="entry name" value="Immunoglobulin"/>
    <property type="match status" value="1"/>
</dbReference>
<dbReference type="PROSITE" id="PS50835">
    <property type="entry name" value="IG_LIKE"/>
    <property type="match status" value="1"/>
</dbReference>
<protein>
    <recommendedName>
        <fullName evidence="8">T cell receptor alpha variable 40</fullName>
    </recommendedName>
</protein>
<feature type="signal peptide" evidence="1">
    <location>
        <begin position="1"/>
        <end position="19"/>
    </location>
</feature>
<feature type="chain" id="PRO_5002091833" description="T cell receptor alpha variable 40" evidence="1">
    <location>
        <begin position="20"/>
        <end position="105"/>
    </location>
</feature>
<feature type="domain" description="Ig-like" evidence="2">
    <location>
        <begin position="20"/>
        <end position="105" status="greater than"/>
    </location>
</feature>
<feature type="glycosylation site" description="N-linked (GlcNAc...) asparagine" evidence="1">
    <location>
        <position position="39"/>
    </location>
</feature>
<feature type="disulfide bond" evidence="2">
    <location>
        <begin position="40"/>
        <end position="102"/>
    </location>
</feature>
<feature type="non-terminal residue">
    <location>
        <position position="105"/>
    </location>
</feature>
<name>TVA40_HUMAN</name>
<sequence length="105" mass="11556">MNSSLDFLILILMFGGTSSNSVKQTGQITVSEGASVTMNCTYTSTGYPTLFWYVEYPSKPLQLLQRETMENSKNFGGGNIKDKNSPIVKYSVQVSDSAVYYCLLG</sequence>
<evidence type="ECO:0000255" key="1"/>
<evidence type="ECO:0000255" key="2">
    <source>
        <dbReference type="PROSITE-ProRule" id="PRU00114"/>
    </source>
</evidence>
<evidence type="ECO:0000303" key="3">
    <source>
    </source>
</evidence>
<evidence type="ECO:0000303" key="4">
    <source>
    </source>
</evidence>
<evidence type="ECO:0000303" key="5">
    <source>
    </source>
</evidence>
<evidence type="ECO:0000303" key="6">
    <source>
    </source>
</evidence>
<evidence type="ECO:0000303" key="7">
    <source>
    </source>
</evidence>
<evidence type="ECO:0000303" key="8">
    <source ref="2"/>
</evidence>
<evidence type="ECO:0000305" key="9"/>
<organism>
    <name type="scientific">Homo sapiens</name>
    <name type="common">Human</name>
    <dbReference type="NCBI Taxonomy" id="9606"/>
    <lineage>
        <taxon>Eukaryota</taxon>
        <taxon>Metazoa</taxon>
        <taxon>Chordata</taxon>
        <taxon>Craniata</taxon>
        <taxon>Vertebrata</taxon>
        <taxon>Euteleostomi</taxon>
        <taxon>Mammalia</taxon>
        <taxon>Eutheria</taxon>
        <taxon>Euarchontoglires</taxon>
        <taxon>Primates</taxon>
        <taxon>Haplorrhini</taxon>
        <taxon>Catarrhini</taxon>
        <taxon>Hominidae</taxon>
        <taxon>Homo</taxon>
    </lineage>
</organism>
<keyword id="KW-1064">Adaptive immunity</keyword>
<keyword id="KW-1003">Cell membrane</keyword>
<keyword id="KW-1015">Disulfide bond</keyword>
<keyword id="KW-0325">Glycoprotein</keyword>
<keyword id="KW-0391">Immunity</keyword>
<keyword id="KW-0393">Immunoglobulin domain</keyword>
<keyword id="KW-0472">Membrane</keyword>
<keyword id="KW-0675">Receptor</keyword>
<keyword id="KW-1185">Reference proteome</keyword>
<keyword id="KW-0732">Signal</keyword>
<keyword id="KW-1279">T cell receptor</keyword>
<comment type="function">
    <text evidence="3 5 6 7">V region of the variable domain of T cell receptor (TR) alpha chain that participates in the antigen recognition (PubMed:24600447). Alpha-beta T cell receptors are antigen specific receptors which are essential to the immune response and are present on the cell surface of T lymphocytes. Recognize peptide-major histocompatibility (MH) (pMH) complexes that are displayed by antigen presenting cells (APC), a prerequisite for efficient T cell adaptive immunity against pathogens (PubMed:25493333). Binding of alpha-beta TR to pMH complex initiates TR-CD3 clustering on the cell surface and intracellular activation of LCK that phosphorylates the ITAM motifs of CD3G, CD3D, CD3E and CD247 enabling the recruitment of ZAP70. In turn ZAP70 phosphorylates LAT, which recruits numerous signaling molecules to form the LAT signalosome. The LAT signalosome propagates signal branching to three major signaling pathways, the calcium, the mitogen-activated protein kinase (MAPK) kinase and the nuclear factor NF-kappa-B (NF-kB) pathways, leading to the mobilization of transcription factors that are critical for gene expression and essential for T cell growth and differentiation (PubMed:23524462). The T cell repertoire is generated in the thymus, by V-(D)-J rearrangement. This repertoire is then shaped by intrathymic selection events to generate a peripheral T cell pool of self-MH restricted, non-autoaggressive T cells. Post-thymic interaction of alpha-beta TR with the pMH complexes shapes TR structural and functional avidity (PubMed:15040585).</text>
</comment>
<comment type="subunit">
    <text evidence="4">Alpha-beta TR is a heterodimer composed of an alpha and beta chain; disulfide-linked. The alpha-beta TR is associated with the transmembrane signaling CD3 coreceptor proteins to form the TR-CD3 (TcR or TCR). The assembly of alpha-beta TR heterodimers with CD3 occurs in the endoplasmic reticulum where a single alpha-beta TR heterodimer associates with one CD3D-CD3E heterodimer, one CD3G-CD3E heterodimer and one CD247 homodimer forming a stable octameric structure. CD3D-CD3E and CD3G-CD3E heterodimers preferentially associate with TR alpha and TR beta chains, respectively. The association of the CD247 homodimer is the last step of TcR assembly in the endoplasmic reticulum and is required for transport to the cell surface.</text>
</comment>
<comment type="subcellular location">
    <subcellularLocation>
        <location evidence="4">Cell membrane</location>
    </subcellularLocation>
</comment>
<comment type="polymorphism">
    <text evidence="9">There are several alleles. The sequence shown is that of IMGT allele TRAV40*01.</text>
</comment>
<proteinExistence type="inferred from homology"/>
<accession>A0A0B4J280</accession>
<reference key="1">
    <citation type="journal article" date="2003" name="Nature">
        <title>The DNA sequence and analysis of human chromosome 14.</title>
        <authorList>
            <person name="Heilig R."/>
            <person name="Eckenberg R."/>
            <person name="Petit J.-L."/>
            <person name="Fonknechten N."/>
            <person name="Da Silva C."/>
            <person name="Cattolico L."/>
            <person name="Levy M."/>
            <person name="Barbe V."/>
            <person name="De Berardinis V."/>
            <person name="Ureta-Vidal A."/>
            <person name="Pelletier E."/>
            <person name="Vico V."/>
            <person name="Anthouard V."/>
            <person name="Rowen L."/>
            <person name="Madan A."/>
            <person name="Qin S."/>
            <person name="Sun H."/>
            <person name="Du H."/>
            <person name="Pepin K."/>
            <person name="Artiguenave F."/>
            <person name="Robert C."/>
            <person name="Cruaud C."/>
            <person name="Bruels T."/>
            <person name="Jaillon O."/>
            <person name="Friedlander L."/>
            <person name="Samson G."/>
            <person name="Brottier P."/>
            <person name="Cure S."/>
            <person name="Segurens B."/>
            <person name="Aniere F."/>
            <person name="Samain S."/>
            <person name="Crespeau H."/>
            <person name="Abbasi N."/>
            <person name="Aiach N."/>
            <person name="Boscus D."/>
            <person name="Dickhoff R."/>
            <person name="Dors M."/>
            <person name="Dubois I."/>
            <person name="Friedman C."/>
            <person name="Gouyvenoux M."/>
            <person name="James R."/>
            <person name="Madan A."/>
            <person name="Mairey-Estrada B."/>
            <person name="Mangenot S."/>
            <person name="Martins N."/>
            <person name="Menard M."/>
            <person name="Oztas S."/>
            <person name="Ratcliffe A."/>
            <person name="Shaffer T."/>
            <person name="Trask B."/>
            <person name="Vacherie B."/>
            <person name="Bellemere C."/>
            <person name="Belser C."/>
            <person name="Besnard-Gonnet M."/>
            <person name="Bartol-Mavel D."/>
            <person name="Boutard M."/>
            <person name="Briez-Silla S."/>
            <person name="Combette S."/>
            <person name="Dufosse-Laurent V."/>
            <person name="Ferron C."/>
            <person name="Lechaplais C."/>
            <person name="Louesse C."/>
            <person name="Muselet D."/>
            <person name="Magdelenat G."/>
            <person name="Pateau E."/>
            <person name="Petit E."/>
            <person name="Sirvain-Trukniewicz P."/>
            <person name="Trybou A."/>
            <person name="Vega-Czarny N."/>
            <person name="Bataille E."/>
            <person name="Bluet E."/>
            <person name="Bordelais I."/>
            <person name="Dubois M."/>
            <person name="Dumont C."/>
            <person name="Guerin T."/>
            <person name="Haffray S."/>
            <person name="Hammadi R."/>
            <person name="Muanga J."/>
            <person name="Pellouin V."/>
            <person name="Robert D."/>
            <person name="Wunderle E."/>
            <person name="Gauguet G."/>
            <person name="Roy A."/>
            <person name="Sainte-Marthe L."/>
            <person name="Verdier J."/>
            <person name="Verdier-Discala C."/>
            <person name="Hillier L.W."/>
            <person name="Fulton L."/>
            <person name="McPherson J."/>
            <person name="Matsuda F."/>
            <person name="Wilson R."/>
            <person name="Scarpelli C."/>
            <person name="Gyapay G."/>
            <person name="Wincker P."/>
            <person name="Saurin W."/>
            <person name="Quetier F."/>
            <person name="Waterston R."/>
            <person name="Hood L."/>
            <person name="Weissenbach J."/>
        </authorList>
    </citation>
    <scope>NUCLEOTIDE SEQUENCE [LARGE SCALE GENOMIC DNA] (IMGT ALLELE TRAV40*01)</scope>
</reference>
<reference key="2">
    <citation type="book" date="2001" name="The T Cell Receptor FactsBook.">
        <title>The T Cell Receptor FactsBook.</title>
        <editorList>
            <person name="Lefranc M.P."/>
            <person name="Lefranc G."/>
        </editorList>
        <authorList>
            <person name="Lefranc M.P."/>
            <person name="Lefranc G."/>
        </authorList>
    </citation>
    <scope>NOMENCLATURE</scope>
</reference>
<reference key="3">
    <citation type="journal article" date="2004" name="Nat. Rev. Immunol.">
        <title>The many important facets of T-cell repertoire diversity.</title>
        <authorList>
            <person name="Nikolich-Zugich J."/>
            <person name="Slifka M.K."/>
            <person name="Messaoudi I."/>
        </authorList>
    </citation>
    <scope>REVIEW ON T CELL REPERTOIRE DIVERSITY</scope>
</reference>
<reference key="4">
    <citation type="journal article" date="2010" name="Cold Spring Harb. Perspect. Biol.">
        <title>Structural biology of the T-cell receptor: insights into receptor assembly, ligand recognition, and initiation of signaling.</title>
        <authorList>
            <person name="Wucherpfennig K.W."/>
            <person name="Gagnon E."/>
            <person name="Call M.J."/>
            <person name="Huseby E.S."/>
            <person name="Call M.E."/>
        </authorList>
    </citation>
    <scope>REVIEW ON T CELL RECEPTOR-CD3 COMPLEX ASSEMBLY</scope>
    <scope>SUBCELLULAR LOCATION</scope>
</reference>
<reference key="5">
    <citation type="journal article" date="2013" name="Nat. Rev. Immunol.">
        <title>T cell receptor signalling networks: branched, diversified and bounded.</title>
        <authorList>
            <person name="Brownlie R.J."/>
            <person name="Zamoyska R."/>
        </authorList>
    </citation>
    <scope>REVIEW ON T CELL RECEPTOR SIGNALING</scope>
</reference>
<reference key="6">
    <citation type="journal article" date="2014" name="Front. Immunol.">
        <title>Immunoglobulin and T Cell Receptor Genes: IMGT((R)) and the Birth and Rise of Immunoinformatics.</title>
        <authorList>
            <person name="Lefranc M.P."/>
        </authorList>
    </citation>
    <scope>NOMENCLATURE</scope>
</reference>
<reference key="7">
    <citation type="journal article" date="2015" name="Annu. Rev. Immunol.">
        <title>T cell antigen receptor recognition of antigen-presenting molecules.</title>
        <authorList>
            <person name="Rossjohn J."/>
            <person name="Gras S."/>
            <person name="Miles J.J."/>
            <person name="Turner S.J."/>
            <person name="Godfrey D.I."/>
            <person name="McCluskey J."/>
        </authorList>
    </citation>
    <scope>REVIEW ON FUNCTION</scope>
</reference>
<gene>
    <name evidence="8" type="primary">TRAV40</name>
</gene>